<keyword id="KW-0484">Methanogenesis</keyword>
<keyword id="KW-0489">Methyltransferase</keyword>
<keyword id="KW-0554">One-carbon metabolism</keyword>
<keyword id="KW-1185">Reference proteome</keyword>
<keyword id="KW-0808">Transferase</keyword>
<keyword id="KW-1278">Translocase</keyword>
<sequence length="316" mass="34112">MFKFDRKQEVYEVGGVKFGGQPGEYPTVLVSTMFYARHKIVTDEDKGIFDRAAAETLWNTQVSLSDATGNPYVNQIVGETPESIRKYIDWFIEIDDKTPFLIDSSAGEVRAAAAQYCTEIGVANRAIHNSINASIEQSEIDILTESDVEAAIVLAFNATDPTVKGKLDILEVGGSGQTKGMLQVAEECGIKIPLIDVAAMPLGAGSGATIRSIPTIKGKLGLPVGGGYHNMASAWDWLRKFKKTQPDPKAIYMPADIGTNLVAQIAGSDFLLYGPIENVEKVFPAVAMVDIMLGETAKELGVEIADSENHPVTRLT</sequence>
<proteinExistence type="inferred from homology"/>
<protein>
    <recommendedName>
        <fullName evidence="1">Tetrahydromethanopterin S-methyltransferase subunit H</fullName>
        <ecNumber evidence="1">7.2.1.4</ecNumber>
    </recommendedName>
    <alternativeName>
        <fullName evidence="1">N5-methyltetrahydromethanopterin--coenzyme M methyltransferase subunit H</fullName>
    </alternativeName>
</protein>
<gene>
    <name evidence="1" type="primary">mtrH</name>
    <name type="ordered locus">MA_0269</name>
</gene>
<reference key="1">
    <citation type="journal article" date="2002" name="Genome Res.">
        <title>The genome of Methanosarcina acetivorans reveals extensive metabolic and physiological diversity.</title>
        <authorList>
            <person name="Galagan J.E."/>
            <person name="Nusbaum C."/>
            <person name="Roy A."/>
            <person name="Endrizzi M.G."/>
            <person name="Macdonald P."/>
            <person name="FitzHugh W."/>
            <person name="Calvo S."/>
            <person name="Engels R."/>
            <person name="Smirnov S."/>
            <person name="Atnoor D."/>
            <person name="Brown A."/>
            <person name="Allen N."/>
            <person name="Naylor J."/>
            <person name="Stange-Thomann N."/>
            <person name="DeArellano K."/>
            <person name="Johnson R."/>
            <person name="Linton L."/>
            <person name="McEwan P."/>
            <person name="McKernan K."/>
            <person name="Talamas J."/>
            <person name="Tirrell A."/>
            <person name="Ye W."/>
            <person name="Zimmer A."/>
            <person name="Barber R.D."/>
            <person name="Cann I."/>
            <person name="Graham D.E."/>
            <person name="Grahame D.A."/>
            <person name="Guss A.M."/>
            <person name="Hedderich R."/>
            <person name="Ingram-Smith C."/>
            <person name="Kuettner H.C."/>
            <person name="Krzycki J.A."/>
            <person name="Leigh J.A."/>
            <person name="Li W."/>
            <person name="Liu J."/>
            <person name="Mukhopadhyay B."/>
            <person name="Reeve J.N."/>
            <person name="Smith K."/>
            <person name="Springer T.A."/>
            <person name="Umayam L.A."/>
            <person name="White O."/>
            <person name="White R.H."/>
            <person name="de Macario E.C."/>
            <person name="Ferry J.G."/>
            <person name="Jarrell K.F."/>
            <person name="Jing H."/>
            <person name="Macario A.J.L."/>
            <person name="Paulsen I.T."/>
            <person name="Pritchett M."/>
            <person name="Sowers K.R."/>
            <person name="Swanson R.V."/>
            <person name="Zinder S.H."/>
            <person name="Lander E."/>
            <person name="Metcalf W.W."/>
            <person name="Birren B."/>
        </authorList>
    </citation>
    <scope>NUCLEOTIDE SEQUENCE [LARGE SCALE GENOMIC DNA]</scope>
    <source>
        <strain>ATCC 35395 / DSM 2834 / JCM 12185 / C2A</strain>
    </source>
</reference>
<organism>
    <name type="scientific">Methanosarcina acetivorans (strain ATCC 35395 / DSM 2834 / JCM 12185 / C2A)</name>
    <dbReference type="NCBI Taxonomy" id="188937"/>
    <lineage>
        <taxon>Archaea</taxon>
        <taxon>Methanobacteriati</taxon>
        <taxon>Methanobacteriota</taxon>
        <taxon>Stenosarchaea group</taxon>
        <taxon>Methanomicrobia</taxon>
        <taxon>Methanosarcinales</taxon>
        <taxon>Methanosarcinaceae</taxon>
        <taxon>Methanosarcina</taxon>
    </lineage>
</organism>
<comment type="function">
    <text evidence="1">Part of a complex that catalyzes the formation of methyl-coenzyme M and tetrahydromethanopterin from coenzyme M and methyl-tetrahydromethanopterin. This is an energy-conserving, sodium-ion translocating step. MtrH catalyzes the transfer of the methyl group from methyl-tetrahydromethanopterin to the corrinoid prosthetic group of MtrA.</text>
</comment>
<comment type="catalytic activity">
    <reaction evidence="1">
        <text>5-methyl-5,6,7,8-tetrahydromethanopterin + coenzyme M + 2 Na(+)(in) = 5,6,7,8-tetrahydromethanopterin + methyl-coenzyme M + 2 Na(+)(out)</text>
        <dbReference type="Rhea" id="RHEA:53492"/>
        <dbReference type="ChEBI" id="CHEBI:29101"/>
        <dbReference type="ChEBI" id="CHEBI:58103"/>
        <dbReference type="ChEBI" id="CHEBI:58116"/>
        <dbReference type="ChEBI" id="CHEBI:58286"/>
        <dbReference type="ChEBI" id="CHEBI:58319"/>
        <dbReference type="EC" id="7.2.1.4"/>
    </reaction>
</comment>
<comment type="pathway">
    <text evidence="1">One-carbon metabolism; methanogenesis from CO(2); methyl-coenzyme M from 5,10-methylene-5,6,7,8-tetrahydromethanopterin: step 2/2.</text>
</comment>
<comment type="subunit">
    <text evidence="1">The complex is composed of 8 subunits; MtrA, MtrB, MtrC, MtrD, MtrE, MtrF, MtrG and MtrH.</text>
</comment>
<comment type="similarity">
    <text evidence="1">Belongs to the MtrH family.</text>
</comment>
<evidence type="ECO:0000255" key="1">
    <source>
        <dbReference type="HAMAP-Rule" id="MF_01501"/>
    </source>
</evidence>
<dbReference type="EC" id="7.2.1.4" evidence="1"/>
<dbReference type="EMBL" id="AE010299">
    <property type="protein sequence ID" value="AAM03722.1"/>
    <property type="molecule type" value="Genomic_DNA"/>
</dbReference>
<dbReference type="RefSeq" id="WP_011020327.1">
    <property type="nucleotide sequence ID" value="NC_003552.1"/>
</dbReference>
<dbReference type="SMR" id="Q8TU06"/>
<dbReference type="FunCoup" id="Q8TU06">
    <property type="interactions" value="73"/>
</dbReference>
<dbReference type="STRING" id="188937.MA_0269"/>
<dbReference type="EnsemblBacteria" id="AAM03722">
    <property type="protein sequence ID" value="AAM03722"/>
    <property type="gene ID" value="MA_0269"/>
</dbReference>
<dbReference type="GeneID" id="1472161"/>
<dbReference type="KEGG" id="mac:MA_0269"/>
<dbReference type="HOGENOM" id="CLU_048697_0_0_2"/>
<dbReference type="InParanoid" id="Q8TU06"/>
<dbReference type="OrthoDB" id="18811at2157"/>
<dbReference type="PhylomeDB" id="Q8TU06"/>
<dbReference type="UniPathway" id="UPA00640">
    <property type="reaction ID" value="UER00698"/>
</dbReference>
<dbReference type="Proteomes" id="UP000002487">
    <property type="component" value="Chromosome"/>
</dbReference>
<dbReference type="GO" id="GO:0030269">
    <property type="term" value="F:tetrahydromethanopterin S-methyltransferase activity"/>
    <property type="evidence" value="ECO:0007669"/>
    <property type="project" value="UniProtKB-UniRule"/>
</dbReference>
<dbReference type="GO" id="GO:0019386">
    <property type="term" value="P:methanogenesis, from carbon dioxide"/>
    <property type="evidence" value="ECO:0007669"/>
    <property type="project" value="UniProtKB-UniRule"/>
</dbReference>
<dbReference type="GO" id="GO:0032259">
    <property type="term" value="P:methylation"/>
    <property type="evidence" value="ECO:0007669"/>
    <property type="project" value="UniProtKB-KW"/>
</dbReference>
<dbReference type="GO" id="GO:0006730">
    <property type="term" value="P:one-carbon metabolic process"/>
    <property type="evidence" value="ECO:0007669"/>
    <property type="project" value="UniProtKB-UniRule"/>
</dbReference>
<dbReference type="HAMAP" id="MF_01501">
    <property type="entry name" value="MtrH"/>
    <property type="match status" value="1"/>
</dbReference>
<dbReference type="InterPro" id="IPR011005">
    <property type="entry name" value="Dihydropteroate_synth-like_sf"/>
</dbReference>
<dbReference type="InterPro" id="IPR023467">
    <property type="entry name" value="MeTrfase_MtrH/MtxH"/>
</dbReference>
<dbReference type="InterPro" id="IPR028342">
    <property type="entry name" value="MtrH"/>
</dbReference>
<dbReference type="NCBIfam" id="TIGR01114">
    <property type="entry name" value="mtrH"/>
    <property type="match status" value="1"/>
</dbReference>
<dbReference type="Pfam" id="PF02007">
    <property type="entry name" value="MtrH"/>
    <property type="match status" value="1"/>
</dbReference>
<dbReference type="PIRSF" id="PIRSF500206">
    <property type="entry name" value="MtrH"/>
    <property type="match status" value="1"/>
</dbReference>
<dbReference type="PIRSF" id="PIRSF004960">
    <property type="entry name" value="MtrH_MtxH"/>
    <property type="match status" value="1"/>
</dbReference>
<dbReference type="SUPFAM" id="SSF51717">
    <property type="entry name" value="Dihydropteroate synthetase-like"/>
    <property type="match status" value="1"/>
</dbReference>
<name>MTRH_METAC</name>
<feature type="chain" id="PRO_0000147561" description="Tetrahydromethanopterin S-methyltransferase subunit H">
    <location>
        <begin position="1"/>
        <end position="316"/>
    </location>
</feature>
<accession>Q8TU06</accession>